<name>RS19_SULNB</name>
<accession>A6QCQ2</accession>
<reference key="1">
    <citation type="journal article" date="2007" name="Proc. Natl. Acad. Sci. U.S.A.">
        <title>Deep-sea vent epsilon-proteobacterial genomes provide insights into emergence of pathogens.</title>
        <authorList>
            <person name="Nakagawa S."/>
            <person name="Takaki Y."/>
            <person name="Shimamura S."/>
            <person name="Reysenbach A.-L."/>
            <person name="Takai K."/>
            <person name="Horikoshi K."/>
        </authorList>
    </citation>
    <scope>NUCLEOTIDE SEQUENCE [LARGE SCALE GENOMIC DNA]</scope>
    <source>
        <strain>NBC37-1</strain>
    </source>
</reference>
<feature type="chain" id="PRO_1000051135" description="Small ribosomal subunit protein uS19">
    <location>
        <begin position="1"/>
        <end position="92"/>
    </location>
</feature>
<gene>
    <name evidence="1" type="primary">rpsS</name>
    <name type="ordered locus">SUN_2325</name>
</gene>
<comment type="function">
    <text evidence="1">Protein S19 forms a complex with S13 that binds strongly to the 16S ribosomal RNA.</text>
</comment>
<comment type="similarity">
    <text evidence="1">Belongs to the universal ribosomal protein uS19 family.</text>
</comment>
<dbReference type="EMBL" id="AP009179">
    <property type="protein sequence ID" value="BAF73261.1"/>
    <property type="molecule type" value="Genomic_DNA"/>
</dbReference>
<dbReference type="RefSeq" id="WP_012084100.1">
    <property type="nucleotide sequence ID" value="NC_009663.1"/>
</dbReference>
<dbReference type="SMR" id="A6QCQ2"/>
<dbReference type="STRING" id="387093.SUN_2325"/>
<dbReference type="KEGG" id="sun:SUN_2325"/>
<dbReference type="eggNOG" id="COG0185">
    <property type="taxonomic scope" value="Bacteria"/>
</dbReference>
<dbReference type="HOGENOM" id="CLU_144911_0_1_7"/>
<dbReference type="OrthoDB" id="9797833at2"/>
<dbReference type="Proteomes" id="UP000006378">
    <property type="component" value="Chromosome"/>
</dbReference>
<dbReference type="GO" id="GO:0005737">
    <property type="term" value="C:cytoplasm"/>
    <property type="evidence" value="ECO:0007669"/>
    <property type="project" value="UniProtKB-ARBA"/>
</dbReference>
<dbReference type="GO" id="GO:0015935">
    <property type="term" value="C:small ribosomal subunit"/>
    <property type="evidence" value="ECO:0007669"/>
    <property type="project" value="InterPro"/>
</dbReference>
<dbReference type="GO" id="GO:0019843">
    <property type="term" value="F:rRNA binding"/>
    <property type="evidence" value="ECO:0007669"/>
    <property type="project" value="UniProtKB-UniRule"/>
</dbReference>
<dbReference type="GO" id="GO:0003735">
    <property type="term" value="F:structural constituent of ribosome"/>
    <property type="evidence" value="ECO:0007669"/>
    <property type="project" value="InterPro"/>
</dbReference>
<dbReference type="GO" id="GO:0000028">
    <property type="term" value="P:ribosomal small subunit assembly"/>
    <property type="evidence" value="ECO:0007669"/>
    <property type="project" value="TreeGrafter"/>
</dbReference>
<dbReference type="GO" id="GO:0006412">
    <property type="term" value="P:translation"/>
    <property type="evidence" value="ECO:0007669"/>
    <property type="project" value="UniProtKB-UniRule"/>
</dbReference>
<dbReference type="FunFam" id="3.30.860.10:FF:000001">
    <property type="entry name" value="30S ribosomal protein S19"/>
    <property type="match status" value="1"/>
</dbReference>
<dbReference type="Gene3D" id="3.30.860.10">
    <property type="entry name" value="30s Ribosomal Protein S19, Chain A"/>
    <property type="match status" value="1"/>
</dbReference>
<dbReference type="HAMAP" id="MF_00531">
    <property type="entry name" value="Ribosomal_uS19"/>
    <property type="match status" value="1"/>
</dbReference>
<dbReference type="InterPro" id="IPR002222">
    <property type="entry name" value="Ribosomal_uS19"/>
</dbReference>
<dbReference type="InterPro" id="IPR005732">
    <property type="entry name" value="Ribosomal_uS19_bac-type"/>
</dbReference>
<dbReference type="InterPro" id="IPR020934">
    <property type="entry name" value="Ribosomal_uS19_CS"/>
</dbReference>
<dbReference type="InterPro" id="IPR023575">
    <property type="entry name" value="Ribosomal_uS19_SF"/>
</dbReference>
<dbReference type="NCBIfam" id="TIGR01050">
    <property type="entry name" value="rpsS_bact"/>
    <property type="match status" value="1"/>
</dbReference>
<dbReference type="PANTHER" id="PTHR11880">
    <property type="entry name" value="RIBOSOMAL PROTEIN S19P FAMILY MEMBER"/>
    <property type="match status" value="1"/>
</dbReference>
<dbReference type="PANTHER" id="PTHR11880:SF8">
    <property type="entry name" value="SMALL RIBOSOMAL SUBUNIT PROTEIN US19M"/>
    <property type="match status" value="1"/>
</dbReference>
<dbReference type="Pfam" id="PF00203">
    <property type="entry name" value="Ribosomal_S19"/>
    <property type="match status" value="1"/>
</dbReference>
<dbReference type="PIRSF" id="PIRSF002144">
    <property type="entry name" value="Ribosomal_S19"/>
    <property type="match status" value="1"/>
</dbReference>
<dbReference type="PRINTS" id="PR00975">
    <property type="entry name" value="RIBOSOMALS19"/>
</dbReference>
<dbReference type="SUPFAM" id="SSF54570">
    <property type="entry name" value="Ribosomal protein S19"/>
    <property type="match status" value="1"/>
</dbReference>
<dbReference type="PROSITE" id="PS00323">
    <property type="entry name" value="RIBOSOMAL_S19"/>
    <property type="match status" value="1"/>
</dbReference>
<sequence>MARSTKKGPFIDGHLMKKVLAAKEAGDKKPIKTWSRRSVIFPEFIGLTINVHNGRQFIPVFITENHVGYKLGEFAPTRTFKGHKGSVQKKVG</sequence>
<organism>
    <name type="scientific">Sulfurovum sp. (strain NBC37-1)</name>
    <dbReference type="NCBI Taxonomy" id="387093"/>
    <lineage>
        <taxon>Bacteria</taxon>
        <taxon>Pseudomonadati</taxon>
        <taxon>Campylobacterota</taxon>
        <taxon>Epsilonproteobacteria</taxon>
        <taxon>Campylobacterales</taxon>
        <taxon>Sulfurovaceae</taxon>
        <taxon>Sulfurovum</taxon>
    </lineage>
</organism>
<keyword id="KW-0687">Ribonucleoprotein</keyword>
<keyword id="KW-0689">Ribosomal protein</keyword>
<keyword id="KW-0694">RNA-binding</keyword>
<keyword id="KW-0699">rRNA-binding</keyword>
<evidence type="ECO:0000255" key="1">
    <source>
        <dbReference type="HAMAP-Rule" id="MF_00531"/>
    </source>
</evidence>
<evidence type="ECO:0000305" key="2"/>
<protein>
    <recommendedName>
        <fullName evidence="1">Small ribosomal subunit protein uS19</fullName>
    </recommendedName>
    <alternativeName>
        <fullName evidence="2">30S ribosomal protein S19</fullName>
    </alternativeName>
</protein>
<proteinExistence type="inferred from homology"/>